<accession>A6TSM0</accession>
<organism>
    <name type="scientific">Alkaliphilus metalliredigens (strain QYMF)</name>
    <dbReference type="NCBI Taxonomy" id="293826"/>
    <lineage>
        <taxon>Bacteria</taxon>
        <taxon>Bacillati</taxon>
        <taxon>Bacillota</taxon>
        <taxon>Clostridia</taxon>
        <taxon>Peptostreptococcales</taxon>
        <taxon>Natronincolaceae</taxon>
        <taxon>Alkaliphilus</taxon>
    </lineage>
</organism>
<gene>
    <name evidence="1" type="primary">dnaK</name>
    <name type="ordered locus">Amet_3048</name>
</gene>
<feature type="chain" id="PRO_1000059504" description="Chaperone protein DnaK">
    <location>
        <begin position="1"/>
        <end position="614"/>
    </location>
</feature>
<feature type="region of interest" description="Disordered" evidence="2">
    <location>
        <begin position="579"/>
        <end position="614"/>
    </location>
</feature>
<feature type="compositionally biased region" description="Low complexity" evidence="2">
    <location>
        <begin position="579"/>
        <end position="589"/>
    </location>
</feature>
<feature type="compositionally biased region" description="Acidic residues" evidence="2">
    <location>
        <begin position="590"/>
        <end position="614"/>
    </location>
</feature>
<feature type="modified residue" description="Phosphothreonine; by autocatalysis" evidence="1">
    <location>
        <position position="175"/>
    </location>
</feature>
<proteinExistence type="inferred from homology"/>
<evidence type="ECO:0000255" key="1">
    <source>
        <dbReference type="HAMAP-Rule" id="MF_00332"/>
    </source>
</evidence>
<evidence type="ECO:0000256" key="2">
    <source>
        <dbReference type="SAM" id="MobiDB-lite"/>
    </source>
</evidence>
<protein>
    <recommendedName>
        <fullName evidence="1">Chaperone protein DnaK</fullName>
    </recommendedName>
    <alternativeName>
        <fullName evidence="1">HSP70</fullName>
    </alternativeName>
    <alternativeName>
        <fullName evidence="1">Heat shock 70 kDa protein</fullName>
    </alternativeName>
    <alternativeName>
        <fullName evidence="1">Heat shock protein 70</fullName>
    </alternativeName>
</protein>
<sequence length="614" mass="66493">MGKVIGIDLGTTNSCVAVLEGGEPVVIPNSEGNRTTPSVVAFGKDGERIVGEPAKRQAVVNPEKTIISIKTHMGSDHKVAIDDKNYTPEDISAMILQKIKADAEAYLGEAVTDAVITVPAYFTDSQRQATKDAGKIAGLNVRRIINEPTAASLAYGLDKTDEHQKILVYDLGGGTFDVSILELGDGVFEVLATNGNNNLGGDDFDQALMDYIAEAFKKQEGIDLRKDKMSLQRLKEASEKAKQELSSTMTSSINLPFITATNEGPKHLNMDITRSKFDEITSHLVEKTMGPMRSALKDAGLSASDINKIILVGGSTRIPAVQQAVKKITNQDPHKGVNPDECVAVGAAIQAGVLTGEVKDVLLLDVTPLSLGIETLGGVFTRLIERNTTIPSKKSQTFSTAADNQPAVDIHVLQGEREMAAGNVSLGRFELSGIPPAHRGIPQIEVTFDIDANGIVNVSAKDLGTGKEQKITITASTKLSDEEIEKKIKEAEEHAEEDKMQKEKIEVRNQADSLVYQIEKTLKESEGKIDKEEEGKVTAELEKLKKAVESDIVEDMKKAIEDVNTVFHAISQKLYEQAAQAQEAEGQEQAGDDNIVDAEYEEVKDEETQGEDEK</sequence>
<reference key="1">
    <citation type="journal article" date="2016" name="Genome Announc.">
        <title>Complete genome sequence of Alkaliphilus metalliredigens strain QYMF, an alkaliphilic and metal-reducing bacterium isolated from borax-contaminated leachate ponds.</title>
        <authorList>
            <person name="Hwang C."/>
            <person name="Copeland A."/>
            <person name="Lucas S."/>
            <person name="Lapidus A."/>
            <person name="Barry K."/>
            <person name="Detter J.C."/>
            <person name="Glavina Del Rio T."/>
            <person name="Hammon N."/>
            <person name="Israni S."/>
            <person name="Dalin E."/>
            <person name="Tice H."/>
            <person name="Pitluck S."/>
            <person name="Chertkov O."/>
            <person name="Brettin T."/>
            <person name="Bruce D."/>
            <person name="Han C."/>
            <person name="Schmutz J."/>
            <person name="Larimer F."/>
            <person name="Land M.L."/>
            <person name="Hauser L."/>
            <person name="Kyrpides N."/>
            <person name="Mikhailova N."/>
            <person name="Ye Q."/>
            <person name="Zhou J."/>
            <person name="Richardson P."/>
            <person name="Fields M.W."/>
        </authorList>
    </citation>
    <scope>NUCLEOTIDE SEQUENCE [LARGE SCALE GENOMIC DNA]</scope>
    <source>
        <strain>QYMF</strain>
    </source>
</reference>
<dbReference type="EMBL" id="CP000724">
    <property type="protein sequence ID" value="ABR49188.1"/>
    <property type="molecule type" value="Genomic_DNA"/>
</dbReference>
<dbReference type="RefSeq" id="WP_012064154.1">
    <property type="nucleotide sequence ID" value="NC_009633.1"/>
</dbReference>
<dbReference type="SMR" id="A6TSM0"/>
<dbReference type="STRING" id="293826.Amet_3048"/>
<dbReference type="KEGG" id="amt:Amet_3048"/>
<dbReference type="eggNOG" id="COG0443">
    <property type="taxonomic scope" value="Bacteria"/>
</dbReference>
<dbReference type="HOGENOM" id="CLU_005965_2_4_9"/>
<dbReference type="OrthoDB" id="9766019at2"/>
<dbReference type="Proteomes" id="UP000001572">
    <property type="component" value="Chromosome"/>
</dbReference>
<dbReference type="GO" id="GO:0005524">
    <property type="term" value="F:ATP binding"/>
    <property type="evidence" value="ECO:0007669"/>
    <property type="project" value="UniProtKB-UniRule"/>
</dbReference>
<dbReference type="GO" id="GO:0140662">
    <property type="term" value="F:ATP-dependent protein folding chaperone"/>
    <property type="evidence" value="ECO:0007669"/>
    <property type="project" value="InterPro"/>
</dbReference>
<dbReference type="GO" id="GO:0051082">
    <property type="term" value="F:unfolded protein binding"/>
    <property type="evidence" value="ECO:0007669"/>
    <property type="project" value="InterPro"/>
</dbReference>
<dbReference type="CDD" id="cd10234">
    <property type="entry name" value="ASKHA_NBD_HSP70_DnaK-like"/>
    <property type="match status" value="1"/>
</dbReference>
<dbReference type="FunFam" id="2.60.34.10:FF:000014">
    <property type="entry name" value="Chaperone protein DnaK HSP70"/>
    <property type="match status" value="1"/>
</dbReference>
<dbReference type="FunFam" id="3.30.420.40:FF:000020">
    <property type="entry name" value="Chaperone protein HscA homolog"/>
    <property type="match status" value="1"/>
</dbReference>
<dbReference type="FunFam" id="3.30.420.40:FF:000545">
    <property type="entry name" value="Endoplasmic reticulum chaperone BiP"/>
    <property type="match status" value="1"/>
</dbReference>
<dbReference type="FunFam" id="1.20.1270.10:FF:000001">
    <property type="entry name" value="Molecular chaperone DnaK"/>
    <property type="match status" value="1"/>
</dbReference>
<dbReference type="FunFam" id="3.90.640.10:FF:000003">
    <property type="entry name" value="Molecular chaperone DnaK"/>
    <property type="match status" value="1"/>
</dbReference>
<dbReference type="Gene3D" id="1.20.1270.10">
    <property type="match status" value="1"/>
</dbReference>
<dbReference type="Gene3D" id="3.30.30.30">
    <property type="match status" value="1"/>
</dbReference>
<dbReference type="Gene3D" id="3.30.420.40">
    <property type="match status" value="3"/>
</dbReference>
<dbReference type="Gene3D" id="3.90.640.10">
    <property type="entry name" value="Actin, Chain A, domain 4"/>
    <property type="match status" value="1"/>
</dbReference>
<dbReference type="Gene3D" id="2.60.34.10">
    <property type="entry name" value="Substrate Binding Domain Of DNAk, Chain A, domain 1"/>
    <property type="match status" value="1"/>
</dbReference>
<dbReference type="HAMAP" id="MF_00332">
    <property type="entry name" value="DnaK"/>
    <property type="match status" value="1"/>
</dbReference>
<dbReference type="InterPro" id="IPR043129">
    <property type="entry name" value="ATPase_NBD"/>
</dbReference>
<dbReference type="InterPro" id="IPR012725">
    <property type="entry name" value="Chaperone_DnaK"/>
</dbReference>
<dbReference type="InterPro" id="IPR018181">
    <property type="entry name" value="Heat_shock_70_CS"/>
</dbReference>
<dbReference type="InterPro" id="IPR029048">
    <property type="entry name" value="HSP70_C_sf"/>
</dbReference>
<dbReference type="InterPro" id="IPR029047">
    <property type="entry name" value="HSP70_peptide-bd_sf"/>
</dbReference>
<dbReference type="InterPro" id="IPR013126">
    <property type="entry name" value="Hsp_70_fam"/>
</dbReference>
<dbReference type="NCBIfam" id="NF001413">
    <property type="entry name" value="PRK00290.1"/>
    <property type="match status" value="1"/>
</dbReference>
<dbReference type="NCBIfam" id="TIGR02350">
    <property type="entry name" value="prok_dnaK"/>
    <property type="match status" value="1"/>
</dbReference>
<dbReference type="PANTHER" id="PTHR19375">
    <property type="entry name" value="HEAT SHOCK PROTEIN 70KDA"/>
    <property type="match status" value="1"/>
</dbReference>
<dbReference type="Pfam" id="PF00012">
    <property type="entry name" value="HSP70"/>
    <property type="match status" value="2"/>
</dbReference>
<dbReference type="PRINTS" id="PR00301">
    <property type="entry name" value="HEATSHOCK70"/>
</dbReference>
<dbReference type="SUPFAM" id="SSF53067">
    <property type="entry name" value="Actin-like ATPase domain"/>
    <property type="match status" value="2"/>
</dbReference>
<dbReference type="SUPFAM" id="SSF100934">
    <property type="entry name" value="Heat shock protein 70kD (HSP70), C-terminal subdomain"/>
    <property type="match status" value="1"/>
</dbReference>
<dbReference type="SUPFAM" id="SSF100920">
    <property type="entry name" value="Heat shock protein 70kD (HSP70), peptide-binding domain"/>
    <property type="match status" value="1"/>
</dbReference>
<dbReference type="PROSITE" id="PS00297">
    <property type="entry name" value="HSP70_1"/>
    <property type="match status" value="1"/>
</dbReference>
<dbReference type="PROSITE" id="PS00329">
    <property type="entry name" value="HSP70_2"/>
    <property type="match status" value="1"/>
</dbReference>
<dbReference type="PROSITE" id="PS01036">
    <property type="entry name" value="HSP70_3"/>
    <property type="match status" value="1"/>
</dbReference>
<comment type="function">
    <text evidence="1">Acts as a chaperone.</text>
</comment>
<comment type="induction">
    <text evidence="1">By stress conditions e.g. heat shock.</text>
</comment>
<comment type="similarity">
    <text evidence="1">Belongs to the heat shock protein 70 family.</text>
</comment>
<keyword id="KW-0067">ATP-binding</keyword>
<keyword id="KW-0143">Chaperone</keyword>
<keyword id="KW-0547">Nucleotide-binding</keyword>
<keyword id="KW-0597">Phosphoprotein</keyword>
<keyword id="KW-1185">Reference proteome</keyword>
<keyword id="KW-0346">Stress response</keyword>
<name>DNAK_ALKMQ</name>